<protein>
    <recommendedName>
        <fullName evidence="5">Metacaspase-2</fullName>
        <ecNumber evidence="2">3.4.22.-</ecNumber>
    </recommendedName>
    <alternativeName>
        <fullName evidence="4">TbMCA2</fullName>
    </alternativeName>
    <component>
        <recommendedName>
            <fullName evidence="5">Large subunit p20</fullName>
        </recommendedName>
    </component>
    <component>
        <recommendedName>
            <fullName evidence="5">Small subunit p10</fullName>
        </recommendedName>
    </component>
</protein>
<keyword id="KW-0068">Autocatalytic cleavage</keyword>
<keyword id="KW-0106">Calcium</keyword>
<keyword id="KW-0967">Endosome</keyword>
<keyword id="KW-0378">Hydrolase</keyword>
<keyword id="KW-0479">Metal-binding</keyword>
<keyword id="KW-0645">Protease</keyword>
<keyword id="KW-0788">Thiol protease</keyword>
<keyword id="KW-0865">Zymogen</keyword>
<feature type="propeptide" id="PRO_0000451277" evidence="5">
    <location>
        <begin position="1"/>
        <end status="unknown"/>
    </location>
</feature>
<feature type="chain" id="PRO_0000451279" description="Large subunit p20" evidence="5">
    <location>
        <begin status="unknown"/>
        <end position="268"/>
    </location>
</feature>
<feature type="chain" id="PRO_0000451280" description="Small subunit p10" evidence="2">
    <location>
        <begin position="269"/>
        <end position="347"/>
    </location>
</feature>
<feature type="chain" id="PRO_0000451278" description="Metacaspase-2">
    <location>
        <begin status="unknown"/>
        <end position="347"/>
    </location>
</feature>
<feature type="region of interest" description="Regulates substrate access to the active site" evidence="2">
    <location>
        <begin position="1"/>
        <end position="70"/>
    </location>
</feature>
<feature type="active site" evidence="1">
    <location>
        <position position="158"/>
    </location>
</feature>
<feature type="active site" evidence="2">
    <location>
        <position position="213"/>
    </location>
</feature>
<feature type="binding site" evidence="2">
    <location>
        <position position="173"/>
    </location>
    <ligand>
        <name>Ca(2+)</name>
        <dbReference type="ChEBI" id="CHEBI:29108"/>
    </ligand>
</feature>
<feature type="binding site" evidence="2">
    <location>
        <position position="189"/>
    </location>
    <ligand>
        <name>Ca(2+)</name>
        <dbReference type="ChEBI" id="CHEBI:29108"/>
    </ligand>
</feature>
<feature type="binding site" evidence="2">
    <location>
        <position position="190"/>
    </location>
    <ligand>
        <name>Ca(2+)</name>
        <dbReference type="ChEBI" id="CHEBI:29108"/>
    </ligand>
</feature>
<feature type="binding site" evidence="2">
    <location>
        <position position="220"/>
    </location>
    <ligand>
        <name>Ca(2+)</name>
        <dbReference type="ChEBI" id="CHEBI:29108"/>
    </ligand>
</feature>
<feature type="site" description="Important for Arg/Lys-specific substrate specificity" evidence="2">
    <location>
        <position position="95"/>
    </location>
</feature>
<feature type="site" description="Important for Arg/Lys-specific substrate specificity" evidence="2">
    <location>
        <position position="211"/>
    </location>
</feature>
<feature type="site" description="Cleavage; by autolysis" evidence="2">
    <location>
        <position position="268"/>
    </location>
</feature>
<organism>
    <name type="scientific">Trypanosoma brucei brucei</name>
    <dbReference type="NCBI Taxonomy" id="5702"/>
    <lineage>
        <taxon>Eukaryota</taxon>
        <taxon>Discoba</taxon>
        <taxon>Euglenozoa</taxon>
        <taxon>Kinetoplastea</taxon>
        <taxon>Metakinetoplastina</taxon>
        <taxon>Trypanosomatida</taxon>
        <taxon>Trypanosomatidae</taxon>
        <taxon>Trypanosoma</taxon>
    </lineage>
</organism>
<dbReference type="EC" id="3.4.22.-" evidence="2"/>
<dbReference type="EMBL" id="AJ437302">
    <property type="protein sequence ID" value="CAD24803.1"/>
    <property type="molecule type" value="mRNA"/>
</dbReference>
<dbReference type="SMR" id="Q8T8E7"/>
<dbReference type="BindingDB" id="Q8T8E7"/>
<dbReference type="ChEMBL" id="CHEMBL1075193"/>
<dbReference type="MEROPS" id="C14.044"/>
<dbReference type="GO" id="GO:0055037">
    <property type="term" value="C:recycling endosome"/>
    <property type="evidence" value="ECO:0007669"/>
    <property type="project" value="UniProtKB-SubCell"/>
</dbReference>
<dbReference type="GO" id="GO:0004197">
    <property type="term" value="F:cysteine-type endopeptidase activity"/>
    <property type="evidence" value="ECO:0007669"/>
    <property type="project" value="InterPro"/>
</dbReference>
<dbReference type="GO" id="GO:0046872">
    <property type="term" value="F:metal ion binding"/>
    <property type="evidence" value="ECO:0007669"/>
    <property type="project" value="UniProtKB-KW"/>
</dbReference>
<dbReference type="GO" id="GO:0006508">
    <property type="term" value="P:proteolysis"/>
    <property type="evidence" value="ECO:0007669"/>
    <property type="project" value="UniProtKB-KW"/>
</dbReference>
<dbReference type="FunFam" id="3.40.50.12660:FF:000003">
    <property type="entry name" value="Metacaspase MCA2"/>
    <property type="match status" value="1"/>
</dbReference>
<dbReference type="Gene3D" id="3.40.50.12660">
    <property type="match status" value="1"/>
</dbReference>
<dbReference type="InterPro" id="IPR029030">
    <property type="entry name" value="Caspase-like_dom_sf"/>
</dbReference>
<dbReference type="InterPro" id="IPR050452">
    <property type="entry name" value="Metacaspase"/>
</dbReference>
<dbReference type="InterPro" id="IPR011600">
    <property type="entry name" value="Pept_C14_caspase"/>
</dbReference>
<dbReference type="PANTHER" id="PTHR48104:SF30">
    <property type="entry name" value="METACASPASE-1"/>
    <property type="match status" value="1"/>
</dbReference>
<dbReference type="PANTHER" id="PTHR48104">
    <property type="entry name" value="METACASPASE-4"/>
    <property type="match status" value="1"/>
</dbReference>
<dbReference type="Pfam" id="PF00656">
    <property type="entry name" value="Peptidase_C14"/>
    <property type="match status" value="1"/>
</dbReference>
<dbReference type="SUPFAM" id="SSF52129">
    <property type="entry name" value="Caspase-like"/>
    <property type="match status" value="1"/>
</dbReference>
<proteinExistence type="evidence at protein level"/>
<evidence type="ECO:0000250" key="1">
    <source>
        <dbReference type="UniProtKB" id="Q08601"/>
    </source>
</evidence>
<evidence type="ECO:0000250" key="2">
    <source>
        <dbReference type="UniProtKB" id="Q585F3"/>
    </source>
</evidence>
<evidence type="ECO:0000269" key="3">
    <source>
    </source>
</evidence>
<evidence type="ECO:0000303" key="4">
    <source>
    </source>
</evidence>
<evidence type="ECO:0000305" key="5"/>
<evidence type="ECO:0000305" key="6">
    <source>
    </source>
</evidence>
<evidence type="ECO:0000312" key="7">
    <source>
        <dbReference type="EMBL" id="CAD24803.1"/>
    </source>
</evidence>
<reference evidence="7" key="1">
    <citation type="journal article" date="2002" name="FEBS Lett.">
        <title>A metacaspase of Trypanosoma brucei causes loss of respiration competence and clonal death in the yeast Saccharomyces cerevisiae.</title>
        <authorList>
            <person name="Szallies A."/>
            <person name="Kubata B.K."/>
            <person name="Duszenko M."/>
        </authorList>
    </citation>
    <scope>NUCLEOTIDE SEQUENCE [MRNA]</scope>
</reference>
<reference evidence="5" key="2">
    <citation type="journal article" date="2006" name="J. Cell Sci.">
        <title>Bloodstream form Trypanosoma brucei depend upon multiple metacaspases associated with RAB11-positive endosomes.</title>
        <authorList>
            <person name="Helms M.J."/>
            <person name="Ambit A."/>
            <person name="Appleton P."/>
            <person name="Tetley L."/>
            <person name="Coombs G.H."/>
            <person name="Mottram J.C."/>
        </authorList>
    </citation>
    <scope>SUBCELLULAR LOCATION</scope>
    <scope>DEVELOPMENTAL STAGE</scope>
    <scope>LACK OF PROTEOLYTIC CLEAVAGE</scope>
    <scope>DISRUPTION PHENOTYPE</scope>
    <source>
        <strain evidence="3">EATRO 795</strain>
    </source>
</reference>
<sequence>MCSLITQLCDAGQLADYVGLGWLNAVSSQPYLVQALGLQPPPRRVDVDAAFRDAEGLHGHQPWVATPLPGRTVRALFIGINYYGTSAALSGCCNDVKQMLATLQKKGLPINEAVILVDEDNFPGRTDQPTRDNIVRYMAWLVKDAKPGDVLFFHYSGHGTQCKSRGDSDEKYDQCIAPVDFQKSGCIVDDDIHKLLFSRLPEKVRLTAVFDCCHSGSIMDLPFTYVCSGGEQASGTPHMKRIREGNDVLGDVMMISGCADEQTSADVKNTATFGTGSTGAGGAATQCITCMLMNNQSLSYGKLLIETRDMLKRKGFKQVPQLSASKAIDLDQTFSLTEMFSVDRSVQ</sequence>
<gene>
    <name evidence="4" type="primary">MCA2</name>
</gene>
<name>MCA2_TRYBB</name>
<accession>Q8T8E7</accession>
<comment type="function">
    <text evidence="2">Cysteine protease that cleaves specifically after arginine or lysine residues.</text>
</comment>
<comment type="activity regulation">
    <text evidence="2">Activated by Ca(2+). In response to calcium binding, the 280-loop, the 280-loop, a disordered loop consisting of residues 269-275, undergoes a conformational change which stabilizes substrates in the active site. The binding to the substrate triggers the release of the N-terminal region resulting in the activation of the enzyme. Proteolytic cleavage is required for catalytic activity towards large protein substrates.</text>
</comment>
<comment type="subunit">
    <text evidence="2">Monomer.</text>
</comment>
<comment type="subcellular location">
    <subcellularLocation>
        <location evidence="6">Recycling endosome</location>
    </subcellularLocation>
</comment>
<comment type="developmental stage">
    <text evidence="3">Specifically expressed in the mammalian blood stage form (at protein level).</text>
</comment>
<comment type="domain">
    <text evidence="2">There are 2 calcium binding sites with high and low affinity, respectively.</text>
</comment>
<comment type="PTM">
    <text evidence="2 3">Auto-proteolytic cleavage of the propeptide after Lys-55 and between the large and small subunits after Lys-268 is required for catalytic activity towards large protein substrates but is dispensable towards small oligopeptide substrates. After processing, the propeptide and the large and small subunits remain associated by non-covalent bonds (By similarity). In vivo, the unprocessed enzyme appears to be the predominant form (PubMed:16507595).</text>
</comment>
<comment type="disruption phenotype">
    <text evidence="3">RNAi-mediated knockdown causes no defect in the growth of the bloodstream stage form (PubMed:16507595). Simultaneous RNAi-mediated knockdown of MCA2, MCA3 and MCA5 in the bloodstream stage form causes a growth arrest resulting from a block prior to cytokinesis; DNA replication and mitosis are normal (PubMed:16507595). Has no effect on VSG protein recycling (PubMed:16507595). Triple knockout of MCA2, MCA3 and MCA5 in the bloodstream form causes an initial slower growth rate in vitro which reaches wild-type levels after several weeks of culture (PubMed:16507595). Triple knockouts have a normal growth rate and virulence in infected mice (PubMed:16507595).</text>
</comment>
<comment type="similarity">
    <text evidence="5">Belongs to the peptidase C14B family.</text>
</comment>
<comment type="caution">
    <text evidence="5">Unlike in strain 927/4 GUTat10.1, there is a Glu instead of a Lys residue at position 55. Lys-55 is predicted to be conserved between strains as the enzyme undergoes auto-processing at this site. It is not clear if the presence of a Glu residue is due to a sequencing error.</text>
</comment>